<evidence type="ECO:0000255" key="1">
    <source>
        <dbReference type="HAMAP-Rule" id="MF_01540"/>
    </source>
</evidence>
<organism>
    <name type="scientific">Pseudoalteromonas translucida (strain TAC 125)</name>
    <dbReference type="NCBI Taxonomy" id="326442"/>
    <lineage>
        <taxon>Bacteria</taxon>
        <taxon>Pseudomonadati</taxon>
        <taxon>Pseudomonadota</taxon>
        <taxon>Gammaproteobacteria</taxon>
        <taxon>Alteromonadales</taxon>
        <taxon>Pseudoalteromonadaceae</taxon>
        <taxon>Pseudoalteromonas</taxon>
    </lineage>
</organism>
<proteinExistence type="inferred from homology"/>
<keyword id="KW-0004">4Fe-4S</keyword>
<keyword id="KW-0028">Amino-acid biosynthesis</keyword>
<keyword id="KW-0198">Cysteine biosynthesis</keyword>
<keyword id="KW-0349">Heme</keyword>
<keyword id="KW-0408">Iron</keyword>
<keyword id="KW-0411">Iron-sulfur</keyword>
<keyword id="KW-0479">Metal-binding</keyword>
<keyword id="KW-0521">NADP</keyword>
<keyword id="KW-0560">Oxidoreductase</keyword>
<keyword id="KW-1185">Reference proteome</keyword>
<dbReference type="EC" id="1.8.1.2" evidence="1"/>
<dbReference type="EMBL" id="CR954246">
    <property type="protein sequence ID" value="CAI85259.1"/>
    <property type="molecule type" value="Genomic_DNA"/>
</dbReference>
<dbReference type="SMR" id="Q3IFM1"/>
<dbReference type="STRING" id="326442.PSHAa0155"/>
<dbReference type="KEGG" id="pha:PSHAa0155"/>
<dbReference type="PATRIC" id="fig|326442.8.peg.149"/>
<dbReference type="eggNOG" id="COG0155">
    <property type="taxonomic scope" value="Bacteria"/>
</dbReference>
<dbReference type="HOGENOM" id="CLU_001975_3_2_6"/>
<dbReference type="BioCyc" id="PHAL326442:PSHA_RS00790-MONOMER"/>
<dbReference type="UniPathway" id="UPA00140">
    <property type="reaction ID" value="UER00207"/>
</dbReference>
<dbReference type="Proteomes" id="UP000006843">
    <property type="component" value="Chromosome I"/>
</dbReference>
<dbReference type="GO" id="GO:0009337">
    <property type="term" value="C:sulfite reductase complex (NADPH)"/>
    <property type="evidence" value="ECO:0007669"/>
    <property type="project" value="InterPro"/>
</dbReference>
<dbReference type="GO" id="GO:0051539">
    <property type="term" value="F:4 iron, 4 sulfur cluster binding"/>
    <property type="evidence" value="ECO:0007669"/>
    <property type="project" value="UniProtKB-KW"/>
</dbReference>
<dbReference type="GO" id="GO:0020037">
    <property type="term" value="F:heme binding"/>
    <property type="evidence" value="ECO:0007669"/>
    <property type="project" value="InterPro"/>
</dbReference>
<dbReference type="GO" id="GO:0046872">
    <property type="term" value="F:metal ion binding"/>
    <property type="evidence" value="ECO:0007669"/>
    <property type="project" value="UniProtKB-KW"/>
</dbReference>
<dbReference type="GO" id="GO:0050661">
    <property type="term" value="F:NADP binding"/>
    <property type="evidence" value="ECO:0007669"/>
    <property type="project" value="InterPro"/>
</dbReference>
<dbReference type="GO" id="GO:0050311">
    <property type="term" value="F:sulfite reductase (ferredoxin) activity"/>
    <property type="evidence" value="ECO:0007669"/>
    <property type="project" value="TreeGrafter"/>
</dbReference>
<dbReference type="GO" id="GO:0004783">
    <property type="term" value="F:sulfite reductase (NADPH) activity"/>
    <property type="evidence" value="ECO:0007669"/>
    <property type="project" value="UniProtKB-UniRule"/>
</dbReference>
<dbReference type="GO" id="GO:0019344">
    <property type="term" value="P:cysteine biosynthetic process"/>
    <property type="evidence" value="ECO:0007669"/>
    <property type="project" value="UniProtKB-KW"/>
</dbReference>
<dbReference type="GO" id="GO:0070814">
    <property type="term" value="P:hydrogen sulfide biosynthetic process"/>
    <property type="evidence" value="ECO:0007669"/>
    <property type="project" value="UniProtKB-UniRule"/>
</dbReference>
<dbReference type="GO" id="GO:0000103">
    <property type="term" value="P:sulfate assimilation"/>
    <property type="evidence" value="ECO:0007669"/>
    <property type="project" value="UniProtKB-UniRule"/>
</dbReference>
<dbReference type="FunFam" id="3.30.413.10:FF:000003">
    <property type="entry name" value="Sulfite reductase [NADPH] hemoprotein beta-component"/>
    <property type="match status" value="1"/>
</dbReference>
<dbReference type="FunFam" id="3.30.413.10:FF:000004">
    <property type="entry name" value="Sulfite reductase [NADPH] hemoprotein beta-component"/>
    <property type="match status" value="1"/>
</dbReference>
<dbReference type="Gene3D" id="3.30.413.10">
    <property type="entry name" value="Sulfite Reductase Hemoprotein, domain 1"/>
    <property type="match status" value="2"/>
</dbReference>
<dbReference type="HAMAP" id="MF_01540">
    <property type="entry name" value="CysI"/>
    <property type="match status" value="1"/>
</dbReference>
<dbReference type="InterPro" id="IPR011786">
    <property type="entry name" value="CysI"/>
</dbReference>
<dbReference type="InterPro" id="IPR005117">
    <property type="entry name" value="NiRdtase/SiRdtase_haem-b_fer"/>
</dbReference>
<dbReference type="InterPro" id="IPR036136">
    <property type="entry name" value="Nit/Sulf_reduc_fer-like_dom_sf"/>
</dbReference>
<dbReference type="InterPro" id="IPR006067">
    <property type="entry name" value="NO2/SO3_Rdtase_4Fe4S_dom"/>
</dbReference>
<dbReference type="InterPro" id="IPR045169">
    <property type="entry name" value="NO2/SO3_Rdtase_4Fe4S_prot"/>
</dbReference>
<dbReference type="InterPro" id="IPR045854">
    <property type="entry name" value="NO2/SO3_Rdtase_4Fe4S_sf"/>
</dbReference>
<dbReference type="InterPro" id="IPR006066">
    <property type="entry name" value="NO2/SO3_Rdtase_FeS/sirohaem_BS"/>
</dbReference>
<dbReference type="NCBIfam" id="TIGR02041">
    <property type="entry name" value="CysI"/>
    <property type="match status" value="1"/>
</dbReference>
<dbReference type="NCBIfam" id="NF010029">
    <property type="entry name" value="PRK13504.1"/>
    <property type="match status" value="1"/>
</dbReference>
<dbReference type="PANTHER" id="PTHR11493:SF47">
    <property type="entry name" value="SULFITE REDUCTASE [NADPH] SUBUNIT BETA"/>
    <property type="match status" value="1"/>
</dbReference>
<dbReference type="PANTHER" id="PTHR11493">
    <property type="entry name" value="SULFITE REDUCTASE [NADPH] SUBUNIT BETA-RELATED"/>
    <property type="match status" value="1"/>
</dbReference>
<dbReference type="Pfam" id="PF01077">
    <property type="entry name" value="NIR_SIR"/>
    <property type="match status" value="1"/>
</dbReference>
<dbReference type="Pfam" id="PF03460">
    <property type="entry name" value="NIR_SIR_ferr"/>
    <property type="match status" value="2"/>
</dbReference>
<dbReference type="PRINTS" id="PR00397">
    <property type="entry name" value="SIROHAEM"/>
</dbReference>
<dbReference type="SUPFAM" id="SSF56014">
    <property type="entry name" value="Nitrite and sulphite reductase 4Fe-4S domain-like"/>
    <property type="match status" value="2"/>
</dbReference>
<dbReference type="SUPFAM" id="SSF55124">
    <property type="entry name" value="Nitrite/Sulfite reductase N-terminal domain-like"/>
    <property type="match status" value="2"/>
</dbReference>
<sequence length="565" mass="62933">MSEQDKNVKLSDNERMKRESNFLRGTIATDLKDEITGGFTADNFQLIRFHGMYQQDDRDIRGERAKQKLEPLHNVMLRARMPGGIIKPEQWLAIDKFAEEKTSYGSIRLTTRQTFQFHGVLKPNIKGMHQLLDSVGIDSIATAGDVNRNVLCTTNPVESELHQEAYEWAAKISEHLLPKTKAYAEIWLNGEKAETTEEPILGSNYLPRKFKTTVTIPPNNEVDVHANDLNFVAIAENGKLIGFNVLVGGGLAMTHGDTATYPRKADDFGFIPLEHTLKIAEHVVSVQRDWGNRSNRKNAKTKYTLDRVGVDVFKAEVEKRAGVEFASSRPYKFTHRGDRIGWVEGIDGKHHLTLFIQSGRILDYPDKPLKTGCRKIAEVHQGDMRMTANQNLIIAGVAANQKAVIEEIARNHGLIDDKDTEQRKNSMACVALPTCPLAMAEAERYLPSLVEKIEALLAKHGVPNDSIIMRVVGCPNGCGRAMLAEAGLVGKGPGKYNVYLGGNLEGTRIPKLYLENVGEDVYLAAFDELIGQWVNERNDGECFGDFVIRKGIVAEVKVSVTDFHA</sequence>
<name>CYSI_PSET1</name>
<accession>Q3IFM1</accession>
<reference key="1">
    <citation type="journal article" date="2005" name="Genome Res.">
        <title>Coping with cold: the genome of the versatile marine Antarctica bacterium Pseudoalteromonas haloplanktis TAC125.</title>
        <authorList>
            <person name="Medigue C."/>
            <person name="Krin E."/>
            <person name="Pascal G."/>
            <person name="Barbe V."/>
            <person name="Bernsel A."/>
            <person name="Bertin P.N."/>
            <person name="Cheung F."/>
            <person name="Cruveiller S."/>
            <person name="D'Amico S."/>
            <person name="Duilio A."/>
            <person name="Fang G."/>
            <person name="Feller G."/>
            <person name="Ho C."/>
            <person name="Mangenot S."/>
            <person name="Marino G."/>
            <person name="Nilsson J."/>
            <person name="Parrilli E."/>
            <person name="Rocha E.P.C."/>
            <person name="Rouy Z."/>
            <person name="Sekowska A."/>
            <person name="Tutino M.L."/>
            <person name="Vallenet D."/>
            <person name="von Heijne G."/>
            <person name="Danchin A."/>
        </authorList>
    </citation>
    <scope>NUCLEOTIDE SEQUENCE [LARGE SCALE GENOMIC DNA]</scope>
    <source>
        <strain>TAC 125</strain>
    </source>
</reference>
<protein>
    <recommendedName>
        <fullName evidence="1">Sulfite reductase [NADPH] hemoprotein beta-component</fullName>
        <shortName evidence="1">SiR-HP</shortName>
        <shortName evidence="1">SiRHP</shortName>
        <ecNumber evidence="1">1.8.1.2</ecNumber>
    </recommendedName>
</protein>
<comment type="function">
    <text evidence="1">Component of the sulfite reductase complex that catalyzes the 6-electron reduction of sulfite to sulfide. This is one of several activities required for the biosynthesis of L-cysteine from sulfate.</text>
</comment>
<comment type="catalytic activity">
    <reaction evidence="1">
        <text>hydrogen sulfide + 3 NADP(+) + 3 H2O = sulfite + 3 NADPH + 4 H(+)</text>
        <dbReference type="Rhea" id="RHEA:13801"/>
        <dbReference type="ChEBI" id="CHEBI:15377"/>
        <dbReference type="ChEBI" id="CHEBI:15378"/>
        <dbReference type="ChEBI" id="CHEBI:17359"/>
        <dbReference type="ChEBI" id="CHEBI:29919"/>
        <dbReference type="ChEBI" id="CHEBI:57783"/>
        <dbReference type="ChEBI" id="CHEBI:58349"/>
        <dbReference type="EC" id="1.8.1.2"/>
    </reaction>
</comment>
<comment type="cofactor">
    <cofactor evidence="1">
        <name>siroheme</name>
        <dbReference type="ChEBI" id="CHEBI:60052"/>
    </cofactor>
    <text evidence="1">Binds 1 siroheme per subunit.</text>
</comment>
<comment type="cofactor">
    <cofactor evidence="1">
        <name>[4Fe-4S] cluster</name>
        <dbReference type="ChEBI" id="CHEBI:49883"/>
    </cofactor>
    <text evidence="1">Binds 1 [4Fe-4S] cluster per subunit.</text>
</comment>
<comment type="pathway">
    <text evidence="1">Sulfur metabolism; hydrogen sulfide biosynthesis; hydrogen sulfide from sulfite (NADPH route): step 1/1.</text>
</comment>
<comment type="subunit">
    <text evidence="1">Alpha(8)-beta(8). The alpha component is a flavoprotein, the beta component is a hemoprotein.</text>
</comment>
<comment type="similarity">
    <text evidence="1">Belongs to the nitrite and sulfite reductase 4Fe-4S domain family.</text>
</comment>
<feature type="chain" id="PRO_0000292962" description="Sulfite reductase [NADPH] hemoprotein beta-component">
    <location>
        <begin position="1"/>
        <end position="565"/>
    </location>
</feature>
<feature type="binding site" evidence="1">
    <location>
        <position position="429"/>
    </location>
    <ligand>
        <name>[4Fe-4S] cluster</name>
        <dbReference type="ChEBI" id="CHEBI:49883"/>
    </ligand>
</feature>
<feature type="binding site" evidence="1">
    <location>
        <position position="435"/>
    </location>
    <ligand>
        <name>[4Fe-4S] cluster</name>
        <dbReference type="ChEBI" id="CHEBI:49883"/>
    </ligand>
</feature>
<feature type="binding site" evidence="1">
    <location>
        <position position="474"/>
    </location>
    <ligand>
        <name>[4Fe-4S] cluster</name>
        <dbReference type="ChEBI" id="CHEBI:49883"/>
    </ligand>
</feature>
<feature type="binding site" evidence="1">
    <location>
        <position position="478"/>
    </location>
    <ligand>
        <name>[4Fe-4S] cluster</name>
        <dbReference type="ChEBI" id="CHEBI:49883"/>
    </ligand>
</feature>
<feature type="binding site" description="axial binding residue" evidence="1">
    <location>
        <position position="478"/>
    </location>
    <ligand>
        <name>siroheme</name>
        <dbReference type="ChEBI" id="CHEBI:60052"/>
    </ligand>
    <ligandPart>
        <name>Fe</name>
        <dbReference type="ChEBI" id="CHEBI:18248"/>
    </ligandPart>
</feature>
<gene>
    <name evidence="1" type="primary">cysI</name>
    <name type="ordered locus">PSHAa0155</name>
</gene>